<protein>
    <recommendedName>
        <fullName>Carnitine O-acetyltransferase, mitochondrial</fullName>
        <shortName>Carnitine acetylase</shortName>
        <ecNumber>2.3.1.7</ecNumber>
    </recommendedName>
</protein>
<accession>Q00614</accession>
<organism>
    <name type="scientific">Candida tropicalis</name>
    <name type="common">Yeast</name>
    <dbReference type="NCBI Taxonomy" id="5482"/>
    <lineage>
        <taxon>Eukaryota</taxon>
        <taxon>Fungi</taxon>
        <taxon>Dikarya</taxon>
        <taxon>Ascomycota</taxon>
        <taxon>Saccharomycotina</taxon>
        <taxon>Pichiomycetes</taxon>
        <taxon>Debaryomycetaceae</taxon>
        <taxon>Candida/Lodderomyces clade</taxon>
        <taxon>Candida</taxon>
    </lineage>
</organism>
<evidence type="ECO:0000250" key="1"/>
<evidence type="ECO:0000255" key="2"/>
<evidence type="ECO:0000305" key="3"/>
<feature type="transit peptide" description="Mitochondrion" evidence="2">
    <location>
        <begin position="1"/>
        <end status="unknown"/>
    </location>
</feature>
<feature type="chain" id="PRO_0000004430" description="Carnitine O-acetyltransferase, mitochondrial">
    <location>
        <begin status="unknown"/>
        <end position="627"/>
    </location>
</feature>
<feature type="short sequence motif" description="Microbody targeting signal" evidence="2">
    <location>
        <begin position="625"/>
        <end position="627"/>
    </location>
</feature>
<feature type="active site" description="Proton acceptor" evidence="1">
    <location>
        <position position="336"/>
    </location>
</feature>
<feature type="binding site" evidence="1">
    <location>
        <position position="418"/>
    </location>
    <ligand>
        <name>CoA</name>
        <dbReference type="ChEBI" id="CHEBI:57287"/>
    </ligand>
</feature>
<feature type="binding site" evidence="1">
    <location>
        <begin position="422"/>
        <end position="429"/>
    </location>
    <ligand>
        <name>CoA</name>
        <dbReference type="ChEBI" id="CHEBI:57287"/>
    </ligand>
</feature>
<feature type="binding site" evidence="1">
    <location>
        <position position="451"/>
    </location>
    <ligand>
        <name>(R)-carnitine</name>
        <dbReference type="ChEBI" id="CHEBI:16347"/>
    </ligand>
</feature>
<feature type="binding site" evidence="1">
    <location>
        <position position="453"/>
    </location>
    <ligand>
        <name>(R)-carnitine</name>
        <dbReference type="ChEBI" id="CHEBI:16347"/>
    </ligand>
</feature>
<feature type="binding site" evidence="1">
    <location>
        <position position="464"/>
    </location>
    <ligand>
        <name>(R)-carnitine</name>
        <dbReference type="ChEBI" id="CHEBI:16347"/>
    </ligand>
</feature>
<feature type="binding site" evidence="1">
    <location>
        <position position="553"/>
    </location>
    <ligand>
        <name>CoA</name>
        <dbReference type="ChEBI" id="CHEBI:57287"/>
    </ligand>
</feature>
<comment type="function">
    <text evidence="1">Carnitine acetylase is specific for short chain fatty acids. Carnitine acetylase seems to affect the flux through the pyruvate dehydrogenase complex. It may be involved as well in the transport of acetyl-CoA into mitochondria (By similarity).</text>
</comment>
<comment type="catalytic activity">
    <reaction>
        <text>(R)-carnitine + acetyl-CoA = O-acetyl-(R)-carnitine + CoA</text>
        <dbReference type="Rhea" id="RHEA:21136"/>
        <dbReference type="ChEBI" id="CHEBI:16347"/>
        <dbReference type="ChEBI" id="CHEBI:57287"/>
        <dbReference type="ChEBI" id="CHEBI:57288"/>
        <dbReference type="ChEBI" id="CHEBI:57589"/>
        <dbReference type="EC" id="2.3.1.7"/>
    </reaction>
</comment>
<comment type="subcellular location">
    <subcellularLocation>
        <location evidence="1">Peroxisome</location>
    </subcellularLocation>
    <subcellularLocation>
        <location evidence="1">Mitochondrion inner membrane</location>
        <topology evidence="1">Peripheral membrane protein</topology>
        <orientation evidence="1">Matrix side</orientation>
    </subcellularLocation>
</comment>
<comment type="similarity">
    <text evidence="3">Belongs to the carnitine/choline acetyltransferase family.</text>
</comment>
<dbReference type="EC" id="2.3.1.7"/>
<dbReference type="EMBL" id="D84549">
    <property type="protein sequence ID" value="BAA12696.1"/>
    <property type="molecule type" value="Genomic_DNA"/>
</dbReference>
<dbReference type="PIR" id="S68958">
    <property type="entry name" value="S68958"/>
</dbReference>
<dbReference type="SMR" id="Q00614"/>
<dbReference type="VEuPathDB" id="FungiDB:CTMYA2_034660"/>
<dbReference type="VEuPathDB" id="FungiDB:CTRG_00243"/>
<dbReference type="GO" id="GO:0005743">
    <property type="term" value="C:mitochondrial inner membrane"/>
    <property type="evidence" value="ECO:0007669"/>
    <property type="project" value="UniProtKB-SubCell"/>
</dbReference>
<dbReference type="GO" id="GO:0005777">
    <property type="term" value="C:peroxisome"/>
    <property type="evidence" value="ECO:0007669"/>
    <property type="project" value="UniProtKB-SubCell"/>
</dbReference>
<dbReference type="GO" id="GO:0004092">
    <property type="term" value="F:carnitine O-acetyltransferase activity"/>
    <property type="evidence" value="ECO:0007669"/>
    <property type="project" value="UniProtKB-EC"/>
</dbReference>
<dbReference type="GO" id="GO:0009437">
    <property type="term" value="P:carnitine metabolic process"/>
    <property type="evidence" value="ECO:0007669"/>
    <property type="project" value="EnsemblFungi"/>
</dbReference>
<dbReference type="GO" id="GO:0006631">
    <property type="term" value="P:fatty acid metabolic process"/>
    <property type="evidence" value="ECO:0007669"/>
    <property type="project" value="UniProtKB-KW"/>
</dbReference>
<dbReference type="FunFam" id="3.30.559.70:FF:000007">
    <property type="entry name" value="Carnitine O-acetyltransferase, mitochondrial"/>
    <property type="match status" value="1"/>
</dbReference>
<dbReference type="Gene3D" id="3.30.559.10">
    <property type="entry name" value="Chloramphenicol acetyltransferase-like domain"/>
    <property type="match status" value="1"/>
</dbReference>
<dbReference type="Gene3D" id="3.30.559.70">
    <property type="entry name" value="Choline/Carnitine o-acyltransferase, domain 2"/>
    <property type="match status" value="1"/>
</dbReference>
<dbReference type="InterPro" id="IPR000542">
    <property type="entry name" value="Carn_acyl_trans"/>
</dbReference>
<dbReference type="InterPro" id="IPR023213">
    <property type="entry name" value="CAT-like_dom_sf"/>
</dbReference>
<dbReference type="InterPro" id="IPR039551">
    <property type="entry name" value="Cho/carn_acyl_trans"/>
</dbReference>
<dbReference type="InterPro" id="IPR042231">
    <property type="entry name" value="Cho/carn_acyl_trans_2"/>
</dbReference>
<dbReference type="PANTHER" id="PTHR22589:SF103">
    <property type="entry name" value="CARNITINE O-ACETYL-TRANSFERASE, ISOFORM A-RELATED"/>
    <property type="match status" value="1"/>
</dbReference>
<dbReference type="PANTHER" id="PTHR22589">
    <property type="entry name" value="CARNITINE O-ACYLTRANSFERASE"/>
    <property type="match status" value="1"/>
</dbReference>
<dbReference type="Pfam" id="PF00755">
    <property type="entry name" value="Carn_acyltransf"/>
    <property type="match status" value="1"/>
</dbReference>
<dbReference type="SUPFAM" id="SSF52777">
    <property type="entry name" value="CoA-dependent acyltransferases"/>
    <property type="match status" value="2"/>
</dbReference>
<dbReference type="PROSITE" id="PS00439">
    <property type="entry name" value="ACYLTRANSF_C_1"/>
    <property type="match status" value="1"/>
</dbReference>
<dbReference type="PROSITE" id="PS00440">
    <property type="entry name" value="ACYLTRANSF_C_2"/>
    <property type="match status" value="1"/>
</dbReference>
<name>CACP_CANTR</name>
<keyword id="KW-0012">Acyltransferase</keyword>
<keyword id="KW-0276">Fatty acid metabolism</keyword>
<keyword id="KW-0443">Lipid metabolism</keyword>
<keyword id="KW-0472">Membrane</keyword>
<keyword id="KW-0496">Mitochondrion</keyword>
<keyword id="KW-0999">Mitochondrion inner membrane</keyword>
<keyword id="KW-0576">Peroxisome</keyword>
<keyword id="KW-0808">Transferase</keyword>
<keyword id="KW-0809">Transit peptide</keyword>
<keyword id="KW-0813">Transport</keyword>
<gene>
    <name type="primary">CAT2</name>
    <name type="synonym">CAT</name>
</gene>
<sequence length="627" mass="70762">MFNFKLSQQVLKNSTKSIMPILKKPFSTSHAKGDLFKYQSQLPKLPVPTLEETASKYLKTVEPFLNQEQLESTKAKVAEFVRPGGAGEALQARLNNFAADKDNWLAEFWDDYAYMSYRDPVVPYVSYFFSHKDVKNIIGQDQLLKATLIAYYTIEFQEKVLDESLDPEVIKGNPFCMNAFKYMFNNSRVPAEGSDITQHYNGEENQFFVVIYKNNFYKVPTHKNGQRLTKGEIYSYLQEIKNDATPKGLGLGALTSLNRDEWLSAYNNLLKSPINEASLGSIFASSFVIALDSNNPVTIEEKSKNCWHGDGQNRFFDKPLEFFVSANGNSGFLGEHSRMDATPTVQLNNTIYKQILETNPNDLIVEIGSSAPRFGNAEILPFDINPTTRANIKDAIAKFDATIAAHDEEIFQHYGYGKGLIKKFKVSPDAYVQLLMQLAYFKYTGKIRPTYESAATRKFLKGRTETGRTVSNESKKFVETWSDPNASSADKVATFQAAAKQHVAYLSAAADGKGVDRHLFGLKQMIQPGEPIPEIFTDPIFSYSQTWYISSSQVPSEFFQSWGWSQVIDDGFGLAYLINNDWIHVHISCKRGNGLQSDHLKWYLVDSANEMKDVLTKGLLTDAKPKL</sequence>
<reference key="1">
    <citation type="journal article" date="1996" name="Eur. J. Biochem.">
        <title>Peroxisomal and mitochondrial carnitine acetyltransferases of the n-alkane-assimilating yeast Candida tropicalis. Analysis of gene structure and translation products.</title>
        <authorList>
            <person name="Kawachi H."/>
            <person name="Atomi H."/>
            <person name="Ueda M."/>
            <person name="Tanaka A."/>
        </authorList>
    </citation>
    <scope>NUCLEOTIDE SEQUENCE [GENOMIC DNA]</scope>
    <source>
        <strain>ATCC 20336 / pK233 / NCYC 997</strain>
    </source>
</reference>
<proteinExistence type="inferred from homology"/>